<proteinExistence type="evidence at protein level"/>
<comment type="function">
    <text evidence="2">Involved in dapdiamide antibiotics biosynthesis. Activates and sequesters N-beta-fumaramoyl-DAP as a covalently tethered thioester for subsequent oxidative modification of the fumaramoyl group.</text>
</comment>
<comment type="cofactor">
    <cofactor evidence="2">
        <name>pantetheine 4'-phosphate</name>
        <dbReference type="ChEBI" id="CHEBI:47942"/>
    </cofactor>
</comment>
<comment type="biophysicochemical properties">
    <kinetics>
        <KM evidence="2">420 uM for N-beta-fumaramoyl-DAP</KM>
        <text evidence="2">kcat is 64 min(-1).</text>
    </kinetics>
</comment>
<comment type="pathway">
    <text evidence="2">Antibiotic biosynthesis.</text>
</comment>
<comment type="similarity">
    <text evidence="4">Belongs to the ATP-dependent AMP-binding enzyme family.</text>
</comment>
<accession>E2JA29</accession>
<organism>
    <name type="scientific">Enterobacter agglomerans</name>
    <name type="common">Erwinia herbicola</name>
    <name type="synonym">Pantoea agglomerans</name>
    <dbReference type="NCBI Taxonomy" id="549"/>
    <lineage>
        <taxon>Bacteria</taxon>
        <taxon>Pseudomonadati</taxon>
        <taxon>Pseudomonadota</taxon>
        <taxon>Gammaproteobacteria</taxon>
        <taxon>Enterobacterales</taxon>
        <taxon>Erwiniaceae</taxon>
        <taxon>Pantoea</taxon>
        <taxon>Pantoea agglomerans group</taxon>
    </lineage>
</organism>
<feature type="chain" id="PRO_0000434794" description="Dapdiamide synthesis protein DdaD">
    <location>
        <begin position="1"/>
        <end position="578"/>
    </location>
</feature>
<feature type="domain" description="Carrier" evidence="1">
    <location>
        <begin position="498"/>
        <end position="573"/>
    </location>
</feature>
<feature type="modified residue" description="O-(pantetheine 4'-phosphoryl)serine" evidence="1 2">
    <location>
        <position position="533"/>
    </location>
</feature>
<sequence length="578" mass="64048">MHSVETFNLPALNSLLETTARRFGNRLAVQDDNGSLTFADFVEKVGILSAKLRLVIKRGEHVAVQLPRGINYIVAAYAIWEAGGVYLPLDNQWPSSRIEGILHRSHVRVLIHTSQADQGLELTELPAETRAESPVAGTPAYIIHTSGTTGEPKGVVVSHESLIHLVESHQRDIYQAYDVTEGPVAINASFCFDSALERMALVALGYSLHVVSDQVRKSPYELVKYLRDNSIVNVDLVPSHLKVLLSAGLNEKCDALRLVIVGGEAIDAELWREIVQNQAIYINVYGPTENTINTSFCEIRGETPHIGRPFKNVTCLLLNENGERCAAGEEGELLVAGRHLAQGYYNAPDLTDRVFVHIDGIRYYRTGDRVRQNEQGNLLYLGRIDDQVKINGFRIELADVQHNLTQLPGVKYAAVTPIKLPTGQGLLASIVWNSDAPEQTFSNLEALLGEKLPSYMVPTRWQKLDALPLTDNLKLDHKSLLSHWKNSQEQIGEKFAAESISATEHQIKNLWQKILRQPSLSPDAHFFASGGDSMAAMTLLVELKKVTPQDVSLGDIFKYPTIRKMAAWLDASSVQAES</sequence>
<reference key="1">
    <citation type="journal article" date="2010" name="J. Am. Chem. Soc.">
        <title>The nonribosomal peptide synthetase enzyme DdaD tethers N(beta)-fumaramoyl-l-2,3-diaminopropionate for Fe(II)/alpha-ketoglutarate-dependent epoxidation by DdaC during dapdiamide antibiotic biosynthesis.</title>
        <authorList>
            <person name="Hollenhorst M.A."/>
            <person name="Bumpus S.B."/>
            <person name="Matthews M.L."/>
            <person name="Bollinger J.M. Jr."/>
            <person name="Kelleher N.L."/>
            <person name="Walsh C.T."/>
        </authorList>
    </citation>
    <scope>NUCLEOTIDE SEQUENCE [GENOMIC DNA]</scope>
    <scope>FUNCTION</scope>
    <scope>COFACTOR</scope>
    <scope>BIOPHYSICOCHEMICAL PROPERTIES</scope>
    <scope>PATHWAY</scope>
    <scope>PHOSPHOPANTETHEINYLATION AT SER-533</scope>
    <source>
        <strain>CU0119</strain>
    </source>
</reference>
<evidence type="ECO:0000255" key="1">
    <source>
        <dbReference type="PROSITE-ProRule" id="PRU00258"/>
    </source>
</evidence>
<evidence type="ECO:0000269" key="2">
    <source>
    </source>
</evidence>
<evidence type="ECO:0000303" key="3">
    <source>
    </source>
</evidence>
<evidence type="ECO:0000305" key="4"/>
<keyword id="KW-0045">Antibiotic biosynthesis</keyword>
<keyword id="KW-0596">Phosphopantetheine</keyword>
<keyword id="KW-0597">Phosphoprotein</keyword>
<name>DDAD_ENTAG</name>
<protein>
    <recommendedName>
        <fullName evidence="4">Dapdiamide synthesis protein DdaD</fullName>
    </recommendedName>
</protein>
<dbReference type="EMBL" id="HQ130277">
    <property type="protein sequence ID" value="ADN39483.1"/>
    <property type="molecule type" value="Genomic_DNA"/>
</dbReference>
<dbReference type="RefSeq" id="WP_033781250.1">
    <property type="nucleotide sequence ID" value="NZ_JPOT02000004.1"/>
</dbReference>
<dbReference type="SMR" id="E2JA29"/>
<dbReference type="BioCyc" id="MetaCyc:MONOMER-19478"/>
<dbReference type="GO" id="GO:0005737">
    <property type="term" value="C:cytoplasm"/>
    <property type="evidence" value="ECO:0007669"/>
    <property type="project" value="TreeGrafter"/>
</dbReference>
<dbReference type="GO" id="GO:0031177">
    <property type="term" value="F:phosphopantetheine binding"/>
    <property type="evidence" value="ECO:0007669"/>
    <property type="project" value="InterPro"/>
</dbReference>
<dbReference type="GO" id="GO:0043041">
    <property type="term" value="P:amino acid activation for nonribosomal peptide biosynthetic process"/>
    <property type="evidence" value="ECO:0007669"/>
    <property type="project" value="TreeGrafter"/>
</dbReference>
<dbReference type="GO" id="GO:0017000">
    <property type="term" value="P:antibiotic biosynthetic process"/>
    <property type="evidence" value="ECO:0007669"/>
    <property type="project" value="UniProtKB-KW"/>
</dbReference>
<dbReference type="GO" id="GO:0044550">
    <property type="term" value="P:secondary metabolite biosynthetic process"/>
    <property type="evidence" value="ECO:0007669"/>
    <property type="project" value="TreeGrafter"/>
</dbReference>
<dbReference type="CDD" id="cd05930">
    <property type="entry name" value="A_NRPS"/>
    <property type="match status" value="1"/>
</dbReference>
<dbReference type="Gene3D" id="3.30.300.30">
    <property type="match status" value="1"/>
</dbReference>
<dbReference type="Gene3D" id="1.10.1200.10">
    <property type="entry name" value="ACP-like"/>
    <property type="match status" value="1"/>
</dbReference>
<dbReference type="Gene3D" id="3.40.50.12780">
    <property type="entry name" value="N-terminal domain of ligase-like"/>
    <property type="match status" value="1"/>
</dbReference>
<dbReference type="InterPro" id="IPR036736">
    <property type="entry name" value="ACP-like_sf"/>
</dbReference>
<dbReference type="InterPro" id="IPR025110">
    <property type="entry name" value="AMP-bd_C"/>
</dbReference>
<dbReference type="InterPro" id="IPR045851">
    <property type="entry name" value="AMP-bd_C_sf"/>
</dbReference>
<dbReference type="InterPro" id="IPR020845">
    <property type="entry name" value="AMP-binding_CS"/>
</dbReference>
<dbReference type="InterPro" id="IPR000873">
    <property type="entry name" value="AMP-dep_synth/lig_dom"/>
</dbReference>
<dbReference type="InterPro" id="IPR042099">
    <property type="entry name" value="ANL_N_sf"/>
</dbReference>
<dbReference type="InterPro" id="IPR020806">
    <property type="entry name" value="PKS_PP-bd"/>
</dbReference>
<dbReference type="InterPro" id="IPR009081">
    <property type="entry name" value="PP-bd_ACP"/>
</dbReference>
<dbReference type="InterPro" id="IPR006162">
    <property type="entry name" value="Ppantetheine_attach_site"/>
</dbReference>
<dbReference type="PANTHER" id="PTHR45527:SF1">
    <property type="entry name" value="FATTY ACID SYNTHASE"/>
    <property type="match status" value="1"/>
</dbReference>
<dbReference type="PANTHER" id="PTHR45527">
    <property type="entry name" value="NONRIBOSOMAL PEPTIDE SYNTHETASE"/>
    <property type="match status" value="1"/>
</dbReference>
<dbReference type="Pfam" id="PF00501">
    <property type="entry name" value="AMP-binding"/>
    <property type="match status" value="1"/>
</dbReference>
<dbReference type="Pfam" id="PF13193">
    <property type="entry name" value="AMP-binding_C"/>
    <property type="match status" value="1"/>
</dbReference>
<dbReference type="Pfam" id="PF00550">
    <property type="entry name" value="PP-binding"/>
    <property type="match status" value="1"/>
</dbReference>
<dbReference type="SMART" id="SM00823">
    <property type="entry name" value="PKS_PP"/>
    <property type="match status" value="1"/>
</dbReference>
<dbReference type="SUPFAM" id="SSF56801">
    <property type="entry name" value="Acetyl-CoA synthetase-like"/>
    <property type="match status" value="1"/>
</dbReference>
<dbReference type="SUPFAM" id="SSF47336">
    <property type="entry name" value="ACP-like"/>
    <property type="match status" value="1"/>
</dbReference>
<dbReference type="PROSITE" id="PS00455">
    <property type="entry name" value="AMP_BINDING"/>
    <property type="match status" value="1"/>
</dbReference>
<dbReference type="PROSITE" id="PS50075">
    <property type="entry name" value="CARRIER"/>
    <property type="match status" value="1"/>
</dbReference>
<dbReference type="PROSITE" id="PS00012">
    <property type="entry name" value="PHOSPHOPANTETHEINE"/>
    <property type="match status" value="1"/>
</dbReference>
<gene>
    <name evidence="3" type="primary">ddaD</name>
</gene>